<name>SNU13_CRYNJ</name>
<evidence type="ECO:0000250" key="1"/>
<evidence type="ECO:0000305" key="2"/>
<reference key="1">
    <citation type="journal article" date="2005" name="Science">
        <title>The genome of the basidiomycetous yeast and human pathogen Cryptococcus neoformans.</title>
        <authorList>
            <person name="Loftus B.J."/>
            <person name="Fung E."/>
            <person name="Roncaglia P."/>
            <person name="Rowley D."/>
            <person name="Amedeo P."/>
            <person name="Bruno D."/>
            <person name="Vamathevan J."/>
            <person name="Miranda M."/>
            <person name="Anderson I.J."/>
            <person name="Fraser J.A."/>
            <person name="Allen J.E."/>
            <person name="Bosdet I.E."/>
            <person name="Brent M.R."/>
            <person name="Chiu R."/>
            <person name="Doering T.L."/>
            <person name="Donlin M.J."/>
            <person name="D'Souza C.A."/>
            <person name="Fox D.S."/>
            <person name="Grinberg V."/>
            <person name="Fu J."/>
            <person name="Fukushima M."/>
            <person name="Haas B.J."/>
            <person name="Huang J.C."/>
            <person name="Janbon G."/>
            <person name="Jones S.J.M."/>
            <person name="Koo H.L."/>
            <person name="Krzywinski M.I."/>
            <person name="Kwon-Chung K.J."/>
            <person name="Lengeler K.B."/>
            <person name="Maiti R."/>
            <person name="Marra M.A."/>
            <person name="Marra R.E."/>
            <person name="Mathewson C.A."/>
            <person name="Mitchell T.G."/>
            <person name="Pertea M."/>
            <person name="Riggs F.R."/>
            <person name="Salzberg S.L."/>
            <person name="Schein J.E."/>
            <person name="Shvartsbeyn A."/>
            <person name="Shin H."/>
            <person name="Shumway M."/>
            <person name="Specht C.A."/>
            <person name="Suh B.B."/>
            <person name="Tenney A."/>
            <person name="Utterback T.R."/>
            <person name="Wickes B.L."/>
            <person name="Wortman J.R."/>
            <person name="Wye N.H."/>
            <person name="Kronstad J.W."/>
            <person name="Lodge J.K."/>
            <person name="Heitman J."/>
            <person name="Davis R.W."/>
            <person name="Fraser C.M."/>
            <person name="Hyman R.W."/>
        </authorList>
    </citation>
    <scope>NUCLEOTIDE SEQUENCE [LARGE SCALE GENOMIC DNA]</scope>
    <source>
        <strain>JEC21 / ATCC MYA-565</strain>
    </source>
</reference>
<sequence>MSAQPNPKAFPLANAQLTNQILDLIQQAQHYKQLKKGANEATKTLNRGICEFIVMTADVEPIEIVLHLPLLCEDKNVPYVFLPSKTALGRACGVSRPVIAASVTTNEARELNAQIQAVKNEIEKLLI</sequence>
<dbReference type="EMBL" id="AE017347">
    <property type="protein sequence ID" value="AAW44542.1"/>
    <property type="molecule type" value="Genomic_DNA"/>
</dbReference>
<dbReference type="RefSeq" id="XP_571849.1">
    <property type="nucleotide sequence ID" value="XM_571849.1"/>
</dbReference>
<dbReference type="SMR" id="P0CQ52"/>
<dbReference type="FunCoup" id="P0CQ52">
    <property type="interactions" value="606"/>
</dbReference>
<dbReference type="STRING" id="214684.P0CQ52"/>
<dbReference type="PaxDb" id="214684-P0CQ52"/>
<dbReference type="EnsemblFungi" id="AAW44542">
    <property type="protein sequence ID" value="AAW44542"/>
    <property type="gene ID" value="CNG01500"/>
</dbReference>
<dbReference type="GeneID" id="3258685"/>
<dbReference type="KEGG" id="cne:CNG01500"/>
<dbReference type="VEuPathDB" id="FungiDB:CNG01500"/>
<dbReference type="eggNOG" id="KOG3387">
    <property type="taxonomic scope" value="Eukaryota"/>
</dbReference>
<dbReference type="HOGENOM" id="CLU_084513_4_1_1"/>
<dbReference type="InParanoid" id="P0CQ52"/>
<dbReference type="OMA" id="IKNQIYA"/>
<dbReference type="OrthoDB" id="1924699at2759"/>
<dbReference type="Proteomes" id="UP000002149">
    <property type="component" value="Chromosome 7"/>
</dbReference>
<dbReference type="GO" id="GO:0031428">
    <property type="term" value="C:box C/D methylation guide snoRNP complex"/>
    <property type="evidence" value="ECO:0000318"/>
    <property type="project" value="GO_Central"/>
</dbReference>
<dbReference type="GO" id="GO:0005730">
    <property type="term" value="C:nucleolus"/>
    <property type="evidence" value="ECO:0000318"/>
    <property type="project" value="GO_Central"/>
</dbReference>
<dbReference type="GO" id="GO:0071011">
    <property type="term" value="C:precatalytic spliceosome"/>
    <property type="evidence" value="ECO:0000318"/>
    <property type="project" value="GO_Central"/>
</dbReference>
<dbReference type="GO" id="GO:0032040">
    <property type="term" value="C:small-subunit processome"/>
    <property type="evidence" value="ECO:0000318"/>
    <property type="project" value="GO_Central"/>
</dbReference>
<dbReference type="GO" id="GO:0046540">
    <property type="term" value="C:U4/U6 x U5 tri-snRNP complex"/>
    <property type="evidence" value="ECO:0000318"/>
    <property type="project" value="GO_Central"/>
</dbReference>
<dbReference type="GO" id="GO:0003723">
    <property type="term" value="F:RNA binding"/>
    <property type="evidence" value="ECO:0000318"/>
    <property type="project" value="GO_Central"/>
</dbReference>
<dbReference type="GO" id="GO:0030490">
    <property type="term" value="P:maturation of SSU-rRNA"/>
    <property type="evidence" value="ECO:0000318"/>
    <property type="project" value="GO_Central"/>
</dbReference>
<dbReference type="GO" id="GO:0000398">
    <property type="term" value="P:mRNA splicing, via spliceosome"/>
    <property type="evidence" value="ECO:0000318"/>
    <property type="project" value="GO_Central"/>
</dbReference>
<dbReference type="CDD" id="cd21104">
    <property type="entry name" value="SNU13"/>
    <property type="match status" value="1"/>
</dbReference>
<dbReference type="FunFam" id="3.30.1330.30:FF:000002">
    <property type="entry name" value="NHP2-like protein 1 homolog"/>
    <property type="match status" value="1"/>
</dbReference>
<dbReference type="Gene3D" id="3.30.1330.30">
    <property type="match status" value="1"/>
</dbReference>
<dbReference type="InterPro" id="IPR050257">
    <property type="entry name" value="eL8/uL1-like"/>
</dbReference>
<dbReference type="InterPro" id="IPR002415">
    <property type="entry name" value="H/ACA_rnp_Nhp2-like"/>
</dbReference>
<dbReference type="InterPro" id="IPR029064">
    <property type="entry name" value="Ribosomal_eL30-like_sf"/>
</dbReference>
<dbReference type="InterPro" id="IPR004037">
    <property type="entry name" value="Ribosomal_eL8-like_CS"/>
</dbReference>
<dbReference type="InterPro" id="IPR004038">
    <property type="entry name" value="Ribosomal_eL8/eL30/eS12/Gad45"/>
</dbReference>
<dbReference type="InterPro" id="IPR018492">
    <property type="entry name" value="Ribosomal_eL8/Nhp2"/>
</dbReference>
<dbReference type="PANTHER" id="PTHR23105">
    <property type="entry name" value="RIBOSOMAL PROTEIN L7AE FAMILY MEMBER"/>
    <property type="match status" value="1"/>
</dbReference>
<dbReference type="Pfam" id="PF01248">
    <property type="entry name" value="Ribosomal_L7Ae"/>
    <property type="match status" value="1"/>
</dbReference>
<dbReference type="PRINTS" id="PR00881">
    <property type="entry name" value="L7ARS6FAMILY"/>
</dbReference>
<dbReference type="PRINTS" id="PR00883">
    <property type="entry name" value="NUCLEARHMG"/>
</dbReference>
<dbReference type="SUPFAM" id="SSF55315">
    <property type="entry name" value="L30e-like"/>
    <property type="match status" value="1"/>
</dbReference>
<dbReference type="PROSITE" id="PS01082">
    <property type="entry name" value="RIBOSOMAL_L7AE"/>
    <property type="match status" value="1"/>
</dbReference>
<accession>P0CQ52</accession>
<accession>Q55P84</accession>
<accession>Q5KE73</accession>
<organism>
    <name type="scientific">Cryptococcus neoformans var. neoformans serotype D (strain JEC21 / ATCC MYA-565)</name>
    <name type="common">Filobasidiella neoformans</name>
    <dbReference type="NCBI Taxonomy" id="214684"/>
    <lineage>
        <taxon>Eukaryota</taxon>
        <taxon>Fungi</taxon>
        <taxon>Dikarya</taxon>
        <taxon>Basidiomycota</taxon>
        <taxon>Agaricomycotina</taxon>
        <taxon>Tremellomycetes</taxon>
        <taxon>Tremellales</taxon>
        <taxon>Cryptococcaceae</taxon>
        <taxon>Cryptococcus</taxon>
        <taxon>Cryptococcus neoformans species complex</taxon>
    </lineage>
</organism>
<protein>
    <recommendedName>
        <fullName>13 kDa ribonucleoprotein-associated protein</fullName>
    </recommendedName>
</protein>
<comment type="function">
    <text evidence="1">Common component of the spliceosome and rRNA processing machinery. In association with the spliceosomal U4/U6.U5 tri-snRNP particle, required for splicing of pre-mRNA. In association with box C/D snoRNPs, required for processing of pre-ribosomal RNA (rRNA) and site-specific 2'-O-methylation of substrate RNAs. Essential for the accumulation and stability of U4 snRNA, U6 snRNA, and box C/D snoRNAs (By similarity).</text>
</comment>
<comment type="subunit">
    <text evidence="1">Component of the U3 snoRNP particle. Binds to the C'/D and B/C motifs in U3 snoRNA. Component of the 25S U4/U6.U5 tri-snRNP particle, a subcomplex of the spliceosome. Binds to the 5' stem-loop of U4 snRNA (By similarity).</text>
</comment>
<comment type="subcellular location">
    <subcellularLocation>
        <location evidence="1">Nucleus</location>
        <location evidence="1">Nucleolus</location>
    </subcellularLocation>
</comment>
<comment type="similarity">
    <text evidence="2">Belongs to the eukaryotic ribosomal protein eL8 family.</text>
</comment>
<proteinExistence type="inferred from homology"/>
<keyword id="KW-0507">mRNA processing</keyword>
<keyword id="KW-0508">mRNA splicing</keyword>
<keyword id="KW-0539">Nucleus</keyword>
<keyword id="KW-1185">Reference proteome</keyword>
<keyword id="KW-0687">Ribonucleoprotein</keyword>
<keyword id="KW-0690">Ribosome biogenesis</keyword>
<keyword id="KW-0694">RNA-binding</keyword>
<keyword id="KW-0698">rRNA processing</keyword>
<keyword id="KW-0747">Spliceosome</keyword>
<feature type="chain" id="PRO_0000290659" description="13 kDa ribonucleoprotein-associated protein">
    <location>
        <begin position="1"/>
        <end position="127"/>
    </location>
</feature>
<gene>
    <name type="primary">SNU13</name>
    <name type="ordered locus">CNG01500</name>
</gene>